<accession>C5FMD4</accession>
<evidence type="ECO:0000255" key="1">
    <source>
        <dbReference type="HAMAP-Rule" id="MF_03139"/>
    </source>
</evidence>
<comment type="function">
    <text evidence="1">Catalyzes the reaction of cyanate with bicarbonate to produce ammonia and carbon dioxide.</text>
</comment>
<comment type="catalytic activity">
    <reaction evidence="1">
        <text>cyanate + hydrogencarbonate + 3 H(+) = NH4(+) + 2 CO2</text>
        <dbReference type="Rhea" id="RHEA:11120"/>
        <dbReference type="ChEBI" id="CHEBI:15378"/>
        <dbReference type="ChEBI" id="CHEBI:16526"/>
        <dbReference type="ChEBI" id="CHEBI:17544"/>
        <dbReference type="ChEBI" id="CHEBI:28938"/>
        <dbReference type="ChEBI" id="CHEBI:29195"/>
        <dbReference type="EC" id="4.2.1.104"/>
    </reaction>
</comment>
<comment type="similarity">
    <text evidence="1">Belongs to the cyanase family.</text>
</comment>
<proteinExistence type="inferred from homology"/>
<feature type="chain" id="PRO_0000403254" description="Cyanate hydratase">
    <location>
        <begin position="1"/>
        <end position="160"/>
    </location>
</feature>
<feature type="active site" evidence="1">
    <location>
        <position position="100"/>
    </location>
</feature>
<feature type="active site" evidence="1">
    <location>
        <position position="103"/>
    </location>
</feature>
<feature type="active site" evidence="1">
    <location>
        <position position="126"/>
    </location>
</feature>
<keyword id="KW-0456">Lyase</keyword>
<keyword id="KW-1185">Reference proteome</keyword>
<gene>
    <name evidence="1" type="primary">CYN1</name>
    <name type="ORF">MCYG_03856</name>
</gene>
<protein>
    <recommendedName>
        <fullName evidence="1">Cyanate hydratase</fullName>
        <shortName evidence="1">Cyanase</shortName>
        <ecNumber evidence="1">4.2.1.104</ecNumber>
    </recommendedName>
    <alternativeName>
        <fullName evidence="1">Cyanate hydrolase</fullName>
    </alternativeName>
    <alternativeName>
        <fullName evidence="1">Cyanate lyase</fullName>
    </alternativeName>
</protein>
<dbReference type="EC" id="4.2.1.104" evidence="1"/>
<dbReference type="EMBL" id="DS995703">
    <property type="protein sequence ID" value="EEQ31037.1"/>
    <property type="molecule type" value="Genomic_DNA"/>
</dbReference>
<dbReference type="RefSeq" id="XP_002848350.1">
    <property type="nucleotide sequence ID" value="XM_002848304.1"/>
</dbReference>
<dbReference type="SMR" id="C5FMD4"/>
<dbReference type="STRING" id="554155.C5FMD4"/>
<dbReference type="GeneID" id="9229674"/>
<dbReference type="VEuPathDB" id="FungiDB:MCYG_03856"/>
<dbReference type="eggNOG" id="ENOG502RY7W">
    <property type="taxonomic scope" value="Eukaryota"/>
</dbReference>
<dbReference type="HOGENOM" id="CLU_103452_0_0_1"/>
<dbReference type="OMA" id="YELVMIN"/>
<dbReference type="OrthoDB" id="10019422at2759"/>
<dbReference type="Proteomes" id="UP000002035">
    <property type="component" value="Unassembled WGS sequence"/>
</dbReference>
<dbReference type="GO" id="GO:0008824">
    <property type="term" value="F:cyanate hydratase activity"/>
    <property type="evidence" value="ECO:0007669"/>
    <property type="project" value="UniProtKB-UniRule"/>
</dbReference>
<dbReference type="GO" id="GO:0003677">
    <property type="term" value="F:DNA binding"/>
    <property type="evidence" value="ECO:0007669"/>
    <property type="project" value="InterPro"/>
</dbReference>
<dbReference type="GO" id="GO:0009439">
    <property type="term" value="P:cyanate metabolic process"/>
    <property type="evidence" value="ECO:0007669"/>
    <property type="project" value="UniProtKB-UniRule"/>
</dbReference>
<dbReference type="CDD" id="cd00559">
    <property type="entry name" value="Cyanase_C"/>
    <property type="match status" value="1"/>
</dbReference>
<dbReference type="CDD" id="cd00093">
    <property type="entry name" value="HTH_XRE"/>
    <property type="match status" value="1"/>
</dbReference>
<dbReference type="Gene3D" id="3.30.1160.10">
    <property type="entry name" value="Cyanate lyase, C-terminal domain"/>
    <property type="match status" value="1"/>
</dbReference>
<dbReference type="Gene3D" id="1.10.260.40">
    <property type="entry name" value="lambda repressor-like DNA-binding domains"/>
    <property type="match status" value="1"/>
</dbReference>
<dbReference type="HAMAP" id="MF_00535">
    <property type="entry name" value="Cyanate_hydrat"/>
    <property type="match status" value="1"/>
</dbReference>
<dbReference type="InterPro" id="IPR001387">
    <property type="entry name" value="Cro/C1-type_HTH"/>
</dbReference>
<dbReference type="InterPro" id="IPR008076">
    <property type="entry name" value="Cyanase"/>
</dbReference>
<dbReference type="InterPro" id="IPR003712">
    <property type="entry name" value="Cyanate_lyase_C"/>
</dbReference>
<dbReference type="InterPro" id="IPR036581">
    <property type="entry name" value="Cyanate_lyase_C_sf"/>
</dbReference>
<dbReference type="InterPro" id="IPR010982">
    <property type="entry name" value="Lambda_DNA-bd_dom_sf"/>
</dbReference>
<dbReference type="NCBIfam" id="TIGR00673">
    <property type="entry name" value="cynS"/>
    <property type="match status" value="1"/>
</dbReference>
<dbReference type="PANTHER" id="PTHR34186">
    <property type="entry name" value="CYANATE HYDRATASE"/>
    <property type="match status" value="1"/>
</dbReference>
<dbReference type="PANTHER" id="PTHR34186:SF2">
    <property type="entry name" value="CYANATE HYDRATASE"/>
    <property type="match status" value="1"/>
</dbReference>
<dbReference type="Pfam" id="PF02560">
    <property type="entry name" value="Cyanate_lyase"/>
    <property type="match status" value="1"/>
</dbReference>
<dbReference type="Pfam" id="PF13560">
    <property type="entry name" value="HTH_31"/>
    <property type="match status" value="1"/>
</dbReference>
<dbReference type="PIRSF" id="PIRSF001263">
    <property type="entry name" value="Cyanate_hydratas"/>
    <property type="match status" value="1"/>
</dbReference>
<dbReference type="PRINTS" id="PR01693">
    <property type="entry name" value="CYANASE"/>
</dbReference>
<dbReference type="SMART" id="SM01116">
    <property type="entry name" value="Cyanate_lyase"/>
    <property type="match status" value="1"/>
</dbReference>
<dbReference type="SUPFAM" id="SSF55234">
    <property type="entry name" value="Cyanase C-terminal domain"/>
    <property type="match status" value="1"/>
</dbReference>
<dbReference type="SUPFAM" id="SSF47413">
    <property type="entry name" value="lambda repressor-like DNA-binding domains"/>
    <property type="match status" value="1"/>
</dbReference>
<sequence length="160" mass="17908">MDLVTLDATQHASYPEYCSLLFQGKASKQLSFEQIANHLGRSEVAVAALFYGHARASQEDVEKLCELLGIPPADLSKRLRGFPDRGKGVDMPPKDPLIYRLYEIVQNYGQAYKAVMNEKFGDGIMSAIAFSTKVDKELDDQGNAWAVITMKGKWLPFTRF</sequence>
<reference key="1">
    <citation type="journal article" date="2012" name="MBio">
        <title>Comparative genome analysis of Trichophyton rubrum and related dermatophytes reveals candidate genes involved in infection.</title>
        <authorList>
            <person name="Martinez D.A."/>
            <person name="Oliver B.G."/>
            <person name="Graeser Y."/>
            <person name="Goldberg J.M."/>
            <person name="Li W."/>
            <person name="Martinez-Rossi N.M."/>
            <person name="Monod M."/>
            <person name="Shelest E."/>
            <person name="Barton R.C."/>
            <person name="Birch E."/>
            <person name="Brakhage A.A."/>
            <person name="Chen Z."/>
            <person name="Gurr S.J."/>
            <person name="Heiman D."/>
            <person name="Heitman J."/>
            <person name="Kosti I."/>
            <person name="Rossi A."/>
            <person name="Saif S."/>
            <person name="Samalova M."/>
            <person name="Saunders C.W."/>
            <person name="Shea T."/>
            <person name="Summerbell R.C."/>
            <person name="Xu J."/>
            <person name="Young S."/>
            <person name="Zeng Q."/>
            <person name="Birren B.W."/>
            <person name="Cuomo C.A."/>
            <person name="White T.C."/>
        </authorList>
    </citation>
    <scope>NUCLEOTIDE SEQUENCE [LARGE SCALE GENOMIC DNA]</scope>
    <source>
        <strain>ATCC MYA-4605 / CBS 113480</strain>
    </source>
</reference>
<name>CYNS_ARTOC</name>
<organism>
    <name type="scientific">Arthroderma otae (strain ATCC MYA-4605 / CBS 113480)</name>
    <name type="common">Microsporum canis</name>
    <dbReference type="NCBI Taxonomy" id="554155"/>
    <lineage>
        <taxon>Eukaryota</taxon>
        <taxon>Fungi</taxon>
        <taxon>Dikarya</taxon>
        <taxon>Ascomycota</taxon>
        <taxon>Pezizomycotina</taxon>
        <taxon>Eurotiomycetes</taxon>
        <taxon>Eurotiomycetidae</taxon>
        <taxon>Onygenales</taxon>
        <taxon>Arthrodermataceae</taxon>
        <taxon>Microsporum</taxon>
    </lineage>
</organism>